<feature type="chain" id="PRO_1000090074" description="Glutamate--tRNA ligase">
    <location>
        <begin position="1"/>
        <end position="471"/>
    </location>
</feature>
<feature type="short sequence motif" description="'HIGH' region" evidence="1">
    <location>
        <begin position="9"/>
        <end position="19"/>
    </location>
</feature>
<feature type="short sequence motif" description="'KMSKS' region" evidence="1">
    <location>
        <begin position="237"/>
        <end position="241"/>
    </location>
</feature>
<feature type="binding site" evidence="1">
    <location>
        <position position="98"/>
    </location>
    <ligand>
        <name>Zn(2+)</name>
        <dbReference type="ChEBI" id="CHEBI:29105"/>
    </ligand>
</feature>
<feature type="binding site" evidence="1">
    <location>
        <position position="100"/>
    </location>
    <ligand>
        <name>Zn(2+)</name>
        <dbReference type="ChEBI" id="CHEBI:29105"/>
    </ligand>
</feature>
<feature type="binding site" evidence="1">
    <location>
        <position position="125"/>
    </location>
    <ligand>
        <name>Zn(2+)</name>
        <dbReference type="ChEBI" id="CHEBI:29105"/>
    </ligand>
</feature>
<feature type="binding site" evidence="1">
    <location>
        <position position="127"/>
    </location>
    <ligand>
        <name>Zn(2+)</name>
        <dbReference type="ChEBI" id="CHEBI:29105"/>
    </ligand>
</feature>
<feature type="binding site" evidence="1">
    <location>
        <position position="240"/>
    </location>
    <ligand>
        <name>ATP</name>
        <dbReference type="ChEBI" id="CHEBI:30616"/>
    </ligand>
</feature>
<comment type="function">
    <text evidence="1">Catalyzes the attachment of glutamate to tRNA(Glu) in a two-step reaction: glutamate is first activated by ATP to form Glu-AMP and then transferred to the acceptor end of tRNA(Glu).</text>
</comment>
<comment type="catalytic activity">
    <reaction evidence="1">
        <text>tRNA(Glu) + L-glutamate + ATP = L-glutamyl-tRNA(Glu) + AMP + diphosphate</text>
        <dbReference type="Rhea" id="RHEA:23540"/>
        <dbReference type="Rhea" id="RHEA-COMP:9663"/>
        <dbReference type="Rhea" id="RHEA-COMP:9680"/>
        <dbReference type="ChEBI" id="CHEBI:29985"/>
        <dbReference type="ChEBI" id="CHEBI:30616"/>
        <dbReference type="ChEBI" id="CHEBI:33019"/>
        <dbReference type="ChEBI" id="CHEBI:78442"/>
        <dbReference type="ChEBI" id="CHEBI:78520"/>
        <dbReference type="ChEBI" id="CHEBI:456215"/>
        <dbReference type="EC" id="6.1.1.17"/>
    </reaction>
</comment>
<comment type="cofactor">
    <cofactor evidence="1">
        <name>Zn(2+)</name>
        <dbReference type="ChEBI" id="CHEBI:29105"/>
    </cofactor>
    <text evidence="1">Binds 1 zinc ion per subunit.</text>
</comment>
<comment type="subunit">
    <text evidence="1">Monomer.</text>
</comment>
<comment type="subcellular location">
    <subcellularLocation>
        <location evidence="1">Cytoplasm</location>
    </subcellularLocation>
</comment>
<comment type="similarity">
    <text evidence="1">Belongs to the class-I aminoacyl-tRNA synthetase family. Glutamate--tRNA ligase type 1 subfamily.</text>
</comment>
<protein>
    <recommendedName>
        <fullName evidence="1">Glutamate--tRNA ligase</fullName>
        <ecNumber evidence="1">6.1.1.17</ecNumber>
    </recommendedName>
    <alternativeName>
        <fullName evidence="1">Glutamyl-tRNA synthetase</fullName>
        <shortName evidence="1">GluRS</shortName>
    </alternativeName>
</protein>
<organism>
    <name type="scientific">Escherichia coli (strain SE11)</name>
    <dbReference type="NCBI Taxonomy" id="409438"/>
    <lineage>
        <taxon>Bacteria</taxon>
        <taxon>Pseudomonadati</taxon>
        <taxon>Pseudomonadota</taxon>
        <taxon>Gammaproteobacteria</taxon>
        <taxon>Enterobacterales</taxon>
        <taxon>Enterobacteriaceae</taxon>
        <taxon>Escherichia</taxon>
    </lineage>
</organism>
<gene>
    <name evidence="1" type="primary">gltX</name>
    <name type="ordered locus">ECSE_2693</name>
</gene>
<proteinExistence type="inferred from homology"/>
<reference key="1">
    <citation type="journal article" date="2008" name="DNA Res.">
        <title>Complete genome sequence and comparative analysis of the wild-type commensal Escherichia coli strain SE11 isolated from a healthy adult.</title>
        <authorList>
            <person name="Oshima K."/>
            <person name="Toh H."/>
            <person name="Ogura Y."/>
            <person name="Sasamoto H."/>
            <person name="Morita H."/>
            <person name="Park S.-H."/>
            <person name="Ooka T."/>
            <person name="Iyoda S."/>
            <person name="Taylor T.D."/>
            <person name="Hayashi T."/>
            <person name="Itoh K."/>
            <person name="Hattori M."/>
        </authorList>
    </citation>
    <scope>NUCLEOTIDE SEQUENCE [LARGE SCALE GENOMIC DNA]</scope>
    <source>
        <strain>SE11</strain>
    </source>
</reference>
<name>SYE_ECOSE</name>
<sequence length="471" mass="53816">MKIKTRFAPSPTGYLHVGGARTALYSWLFARNHGGEFVLRIEDTDLERSTPEAIEAIMDGMNWLSLEWDEGPYYQTKRFDRYNAVIDQMLEEGTAYKCYCSKERLEALREEQMAKGEKPRYDGRCRHSHEHHADDEPCVVRFANPQEGSVVFDDQIRGPIEFSNQELDDLIIRRTDGSPTYNFCVVVDDWDMEITHVIRGEDHINNTPRQINILKALKAPVPVYAHVSMINGDDGKKLSKRHGAVSVMQYRDDGYLPEALLNYLVRLGWSHGDQEIFTREEMIKYFTLNAVSKSASAFNTDKLLWLNHHYINALPPEYVATHLQWHIEQENIDTRNGPQLADLVKLLGERCKTLKEMAQSCRYFYEDFAEFDADAAKKHLRPVARQPLEVVRDKLAAITDWTAENVHHAIQATADELEVGMGKVGMPLRVAVTGAGQSPALDVTVHAIGKTRSIERINKALDFIAERENQQ</sequence>
<accession>B6I6U7</accession>
<dbReference type="EC" id="6.1.1.17" evidence="1"/>
<dbReference type="EMBL" id="AP009240">
    <property type="protein sequence ID" value="BAG78217.1"/>
    <property type="molecule type" value="Genomic_DNA"/>
</dbReference>
<dbReference type="RefSeq" id="WP_000695655.1">
    <property type="nucleotide sequence ID" value="NC_011415.1"/>
</dbReference>
<dbReference type="SMR" id="B6I6U7"/>
<dbReference type="GeneID" id="93774730"/>
<dbReference type="KEGG" id="ecy:ECSE_2693"/>
<dbReference type="HOGENOM" id="CLU_015768_6_0_6"/>
<dbReference type="Proteomes" id="UP000008199">
    <property type="component" value="Chromosome"/>
</dbReference>
<dbReference type="GO" id="GO:0005829">
    <property type="term" value="C:cytosol"/>
    <property type="evidence" value="ECO:0007669"/>
    <property type="project" value="TreeGrafter"/>
</dbReference>
<dbReference type="GO" id="GO:0005524">
    <property type="term" value="F:ATP binding"/>
    <property type="evidence" value="ECO:0007669"/>
    <property type="project" value="UniProtKB-UniRule"/>
</dbReference>
<dbReference type="GO" id="GO:0004818">
    <property type="term" value="F:glutamate-tRNA ligase activity"/>
    <property type="evidence" value="ECO:0007669"/>
    <property type="project" value="UniProtKB-UniRule"/>
</dbReference>
<dbReference type="GO" id="GO:0000049">
    <property type="term" value="F:tRNA binding"/>
    <property type="evidence" value="ECO:0007669"/>
    <property type="project" value="InterPro"/>
</dbReference>
<dbReference type="GO" id="GO:0008270">
    <property type="term" value="F:zinc ion binding"/>
    <property type="evidence" value="ECO:0007669"/>
    <property type="project" value="UniProtKB-UniRule"/>
</dbReference>
<dbReference type="GO" id="GO:0006424">
    <property type="term" value="P:glutamyl-tRNA aminoacylation"/>
    <property type="evidence" value="ECO:0007669"/>
    <property type="project" value="UniProtKB-UniRule"/>
</dbReference>
<dbReference type="CDD" id="cd00808">
    <property type="entry name" value="GluRS_core"/>
    <property type="match status" value="1"/>
</dbReference>
<dbReference type="FunFam" id="1.10.10.350:FF:000001">
    <property type="entry name" value="Glutamate--tRNA ligase"/>
    <property type="match status" value="1"/>
</dbReference>
<dbReference type="FunFam" id="3.40.50.620:FF:000007">
    <property type="entry name" value="Glutamate--tRNA ligase"/>
    <property type="match status" value="1"/>
</dbReference>
<dbReference type="Gene3D" id="1.10.10.350">
    <property type="match status" value="1"/>
</dbReference>
<dbReference type="Gene3D" id="3.40.50.620">
    <property type="entry name" value="HUPs"/>
    <property type="match status" value="1"/>
</dbReference>
<dbReference type="HAMAP" id="MF_00022">
    <property type="entry name" value="Glu_tRNA_synth_type1"/>
    <property type="match status" value="1"/>
</dbReference>
<dbReference type="InterPro" id="IPR045462">
    <property type="entry name" value="aa-tRNA-synth_I_cd-bd"/>
</dbReference>
<dbReference type="InterPro" id="IPR020751">
    <property type="entry name" value="aa-tRNA-synth_I_codon-bd_sub2"/>
</dbReference>
<dbReference type="InterPro" id="IPR001412">
    <property type="entry name" value="aa-tRNA-synth_I_CS"/>
</dbReference>
<dbReference type="InterPro" id="IPR008925">
    <property type="entry name" value="aa_tRNA-synth_I_cd-bd_sf"/>
</dbReference>
<dbReference type="InterPro" id="IPR004527">
    <property type="entry name" value="Glu-tRNA-ligase_bac/mito"/>
</dbReference>
<dbReference type="InterPro" id="IPR000924">
    <property type="entry name" value="Glu/Gln-tRNA-synth"/>
</dbReference>
<dbReference type="InterPro" id="IPR020058">
    <property type="entry name" value="Glu/Gln-tRNA-synth_Ib_cat-dom"/>
</dbReference>
<dbReference type="InterPro" id="IPR049940">
    <property type="entry name" value="GluQ/Sye"/>
</dbReference>
<dbReference type="InterPro" id="IPR033910">
    <property type="entry name" value="GluRS_core"/>
</dbReference>
<dbReference type="InterPro" id="IPR014729">
    <property type="entry name" value="Rossmann-like_a/b/a_fold"/>
</dbReference>
<dbReference type="NCBIfam" id="TIGR00464">
    <property type="entry name" value="gltX_bact"/>
    <property type="match status" value="1"/>
</dbReference>
<dbReference type="PANTHER" id="PTHR43311">
    <property type="entry name" value="GLUTAMATE--TRNA LIGASE"/>
    <property type="match status" value="1"/>
</dbReference>
<dbReference type="PANTHER" id="PTHR43311:SF2">
    <property type="entry name" value="GLUTAMATE--TRNA LIGASE, MITOCHONDRIAL-RELATED"/>
    <property type="match status" value="1"/>
</dbReference>
<dbReference type="Pfam" id="PF19269">
    <property type="entry name" value="Anticodon_2"/>
    <property type="match status" value="1"/>
</dbReference>
<dbReference type="Pfam" id="PF00749">
    <property type="entry name" value="tRNA-synt_1c"/>
    <property type="match status" value="1"/>
</dbReference>
<dbReference type="PRINTS" id="PR00987">
    <property type="entry name" value="TRNASYNTHGLU"/>
</dbReference>
<dbReference type="SUPFAM" id="SSF48163">
    <property type="entry name" value="An anticodon-binding domain of class I aminoacyl-tRNA synthetases"/>
    <property type="match status" value="1"/>
</dbReference>
<dbReference type="SUPFAM" id="SSF52374">
    <property type="entry name" value="Nucleotidylyl transferase"/>
    <property type="match status" value="1"/>
</dbReference>
<dbReference type="PROSITE" id="PS00178">
    <property type="entry name" value="AA_TRNA_LIGASE_I"/>
    <property type="match status" value="1"/>
</dbReference>
<keyword id="KW-0030">Aminoacyl-tRNA synthetase</keyword>
<keyword id="KW-0067">ATP-binding</keyword>
<keyword id="KW-0963">Cytoplasm</keyword>
<keyword id="KW-0436">Ligase</keyword>
<keyword id="KW-0479">Metal-binding</keyword>
<keyword id="KW-0547">Nucleotide-binding</keyword>
<keyword id="KW-0648">Protein biosynthesis</keyword>
<keyword id="KW-0862">Zinc</keyword>
<evidence type="ECO:0000255" key="1">
    <source>
        <dbReference type="HAMAP-Rule" id="MF_00022"/>
    </source>
</evidence>